<feature type="chain" id="PRO_0000461811" description="Stretch-activated cation channel MID1">
    <location>
        <begin position="1"/>
        <end position="623"/>
    </location>
</feature>
<feature type="topological domain" description="Extracellular" evidence="7">
    <location>
        <begin position="1"/>
        <end position="57"/>
    </location>
</feature>
<feature type="transmembrane region" description="Helical" evidence="1">
    <location>
        <begin position="58"/>
        <end position="78"/>
    </location>
</feature>
<feature type="topological domain" description="Cytoplasmic" evidence="7">
    <location>
        <begin position="79"/>
        <end position="623"/>
    </location>
</feature>
<feature type="region of interest" description="Disordered" evidence="2">
    <location>
        <begin position="524"/>
        <end position="544"/>
    </location>
</feature>
<feature type="region of interest" description="Required for targeting to the cell membrane" evidence="4">
    <location>
        <begin position="600"/>
        <end position="623"/>
    </location>
</feature>
<feature type="compositionally biased region" description="Low complexity" evidence="2">
    <location>
        <begin position="524"/>
        <end position="536"/>
    </location>
</feature>
<feature type="mutagenesis site" description="Sensitive to conditions of low calcium." evidence="5">
    <original>CP</original>
    <variation>AA</variation>
    <location>
        <begin position="573"/>
        <end position="574"/>
    </location>
</feature>
<feature type="mutagenesis site" description="Protein mislocalized to cytoplasm. Sensitive to conditions of low calcium." evidence="4">
    <location>
        <begin position="600"/>
        <end position="623"/>
    </location>
</feature>
<keyword id="KW-0106">Calcium</keyword>
<keyword id="KW-0107">Calcium channel</keyword>
<keyword id="KW-0109">Calcium transport</keyword>
<keyword id="KW-1003">Cell membrane</keyword>
<keyword id="KW-1015">Disulfide bond</keyword>
<keyword id="KW-0407">Ion channel</keyword>
<keyword id="KW-0406">Ion transport</keyword>
<keyword id="KW-0472">Membrane</keyword>
<keyword id="KW-0812">Transmembrane</keyword>
<keyword id="KW-1133">Transmembrane helix</keyword>
<keyword id="KW-0813">Transport</keyword>
<evidence type="ECO:0000255" key="1"/>
<evidence type="ECO:0000256" key="2">
    <source>
        <dbReference type="SAM" id="MobiDB-lite"/>
    </source>
</evidence>
<evidence type="ECO:0000269" key="3">
    <source>
    </source>
</evidence>
<evidence type="ECO:0000269" key="4">
    <source>
    </source>
</evidence>
<evidence type="ECO:0000269" key="5">
    <source>
    </source>
</evidence>
<evidence type="ECO:0000303" key="6">
    <source>
    </source>
</evidence>
<evidence type="ECO:0000305" key="7"/>
<evidence type="ECO:0000305" key="8">
    <source>
    </source>
</evidence>
<evidence type="ECO:0000312" key="9">
    <source>
        <dbReference type="EMBL" id="AFR93256.2"/>
    </source>
</evidence>
<evidence type="ECO:0000312" key="10">
    <source>
        <dbReference type="Proteomes" id="UP000010091"/>
    </source>
</evidence>
<proteinExistence type="evidence at protein level"/>
<sequence length="623" mass="65882">MPAREVYLKRPATRRQLEGICTRYDGQQRITQLDCEEGCSKRTQPPQRLNPRYKSPDLIHISFIIVLLCILSMTSSVVAQTTTGSSSSKAAATPILPRQTLPTTISLPPLNISHPVLQLALPPTSSLYLTFSICSLTSNATILPTVLISTSSPASFNLGSKPIRDASTGGIPTSSGGKGYNYKSGRNGATWGLKWSSGFGNWTLNGTSETQVHLLLGLGLGNDGSTLNTTGVGNGNVVVQMGASTSGPLHALSAVYPLLGDTTSTSALIFSPLLYSSPQPEPSYPNYTLPGAQLAFPDFSYSEPLNSSLSSNLTLIVVPTNASPTSTDLGNSICAINAASANSSVSGANNTILKSFQPEWMTVGDEQGFRSYWVLGDLAEQGNYTAWVSDDKGVLSQPAWFATKPAGFPCQLVMPNDVCPNLGYSAPLDANSTAVTSPSGATISPTSPIQTLPDDLLELIVQNLEAFSTSLLSHACGRDLFSHVSSCLDCYSAYRDWLCRIVVPQCGAANSTSGATVIETATSTSTSSGTFPTPSTVLRTPSSPRNPSLPIPAYSYYELLPCMSTCNRADRSCPVSMGIRCPKRKVNAAKSYAFVGDDHSYGDGSAAQGVAAQDRWGNRWCNG</sequence>
<comment type="function">
    <text evidence="3 4 5">Calcium-permeable, cation-selective stretch-activated channel (SAC) that functions together with CCH1 to mediate calcium entry into cells (PubMed:20123986, PubMed:23175710). May additionally play a role in cellular detoxification of radicals (PubMed:26385891).</text>
</comment>
<comment type="subunit">
    <text evidence="3 5 8">Forms an oligomer by disulfide bonds (PubMed:20123986). Interacts with CCH1 to form a Ca(2+) influx channel (Probable). Interacts (via C-terminus) with CCP1/cytochrome c peroxidase; the interaction may contribute to cellular detoxification of radicals (PubMed:26385891).</text>
</comment>
<comment type="subcellular location">
    <subcellularLocation>
        <location evidence="4 8">Cell membrane</location>
        <topology evidence="1">Single-pass type I membrane protein</topology>
    </subcellularLocation>
</comment>
<comment type="disruption phenotype">
    <text evidence="3 5">Growth defect during endoplasmic reticulum stress induced by tunicamycin, fluconazole or ketoconazole (PubMed:20123986). Sensitive to conditions of low calcium (PubMed:20123986, PubMed:26385891). Sensitive to oxidative stress induced by hydrogen peroxide during conditions of low calcium (PubMed:26385891).</text>
</comment>
<protein>
    <recommendedName>
        <fullName evidence="7">Stretch-activated cation channel MID1</fullName>
    </recommendedName>
</protein>
<accession>J9VIL4</accession>
<reference evidence="10" key="1">
    <citation type="journal article" date="2014" name="PLoS Genet.">
        <title>Analysis of the genome and transcriptome of Cryptococcus neoformans var. grubii reveals complex RNA expression and microevolution leading to virulence attenuation.</title>
        <authorList>
            <person name="Janbon G."/>
            <person name="Ormerod K.L."/>
            <person name="Paulet D."/>
            <person name="Byrnes E.J. III"/>
            <person name="Yadav V."/>
            <person name="Chatterjee G."/>
            <person name="Mullapudi N."/>
            <person name="Hon C.-C."/>
            <person name="Billmyre R.B."/>
            <person name="Brunel F."/>
            <person name="Bahn Y.-S."/>
            <person name="Chen W."/>
            <person name="Chen Y."/>
            <person name="Chow E.W.L."/>
            <person name="Coppee J.-Y."/>
            <person name="Floyd-Averette A."/>
            <person name="Gaillardin C."/>
            <person name="Gerik K.J."/>
            <person name="Goldberg J."/>
            <person name="Gonzalez-Hilarion S."/>
            <person name="Gujja S."/>
            <person name="Hamlin J.L."/>
            <person name="Hsueh Y.-P."/>
            <person name="Ianiri G."/>
            <person name="Jones S."/>
            <person name="Kodira C.D."/>
            <person name="Kozubowski L."/>
            <person name="Lam W."/>
            <person name="Marra M."/>
            <person name="Mesner L.D."/>
            <person name="Mieczkowski P.A."/>
            <person name="Moyrand F."/>
            <person name="Nielsen K."/>
            <person name="Proux C."/>
            <person name="Rossignol T."/>
            <person name="Schein J.E."/>
            <person name="Sun S."/>
            <person name="Wollschlaeger C."/>
            <person name="Wood I.A."/>
            <person name="Zeng Q."/>
            <person name="Neuveglise C."/>
            <person name="Newlon C.S."/>
            <person name="Perfect J.R."/>
            <person name="Lodge J.K."/>
            <person name="Idnurm A."/>
            <person name="Stajich J.E."/>
            <person name="Kronstad J.W."/>
            <person name="Sanyal K."/>
            <person name="Heitman J."/>
            <person name="Fraser J.A."/>
            <person name="Cuomo C.A."/>
            <person name="Dietrich F.S."/>
        </authorList>
    </citation>
    <scope>NUCLEOTIDE SEQUENCE [LARGE SCALE GENOMIC DNA]</scope>
    <source>
        <strain evidence="10">H99 / ATCC 208821 / CBS 10515 / FGSC 9487</strain>
    </source>
</reference>
<reference evidence="7" key="2">
    <citation type="journal article" date="2010" name="J. Biol. Chem.">
        <title>Cch1 restores intracellular Ca2+ in fungal cells during endoplasmic reticulum stress.</title>
        <authorList>
            <person name="Hong M.P."/>
            <person name="Vu K."/>
            <person name="Bautos J."/>
            <person name="Gelli A."/>
        </authorList>
    </citation>
    <scope>FUNCTION</scope>
    <scope>SUBUNIT</scope>
    <scope>IDENTIFICATION IN A COMPLEX WITH CCH1</scope>
    <scope>SUBCELLULAR LOCATION</scope>
    <scope>DISRUPTION PHENOTYPE</scope>
</reference>
<reference evidence="7" key="3">
    <citation type="journal article" date="2013" name="Eukaryot. Cell">
        <title>Activity of the calcium channel pore Cch1 is dependent on a modulatory region of the subunit Mid1 in Cryptococcus neoformans.</title>
        <authorList>
            <person name="Hong M.P."/>
            <person name="Vu K."/>
            <person name="Bautos J.M."/>
            <person name="Tham R."/>
            <person name="Jamklang M."/>
            <person name="Uhrig J.P."/>
            <person name="Gelli A."/>
        </authorList>
    </citation>
    <scope>FUNCTION</scope>
    <scope>SUBCELLULAR LOCATION</scope>
    <scope>MUTAGENESIS OF 600-SER--GLY-623</scope>
</reference>
<reference evidence="7" key="4">
    <citation type="journal article" date="2015" name="Eukaryot. Cell">
        <title>The Cch1-Mid1 High-Affinity Calcium Channel Contributes to the Virulence of Cryptococcus neoformans by Mitigating Oxidative Stress.</title>
        <authorList>
            <person name="Vu K."/>
            <person name="Bautos J.M."/>
            <person name="Gelli A."/>
        </authorList>
    </citation>
    <scope>FUNCTION</scope>
    <scope>INTERACTION WITH CCP1</scope>
    <scope>DISRUPTION PHENOTYPE</scope>
    <scope>MUTAGENESIS OF 573-CYS-PRO-574</scope>
</reference>
<gene>
    <name evidence="6" type="primary">MID1</name>
    <name evidence="9" type="ORF">CNAG_03751</name>
</gene>
<dbReference type="EMBL" id="CP003821">
    <property type="protein sequence ID" value="AFR93256.2"/>
    <property type="molecule type" value="Genomic_DNA"/>
</dbReference>
<dbReference type="RefSeq" id="XP_012047206.1">
    <property type="nucleotide sequence ID" value="XM_012191816.1"/>
</dbReference>
<dbReference type="GeneID" id="23887221"/>
<dbReference type="KEGG" id="cng:CNAG_03751"/>
<dbReference type="VEuPathDB" id="FungiDB:CNAG_03751"/>
<dbReference type="HOGENOM" id="CLU_438718_0_0_1"/>
<dbReference type="OrthoDB" id="8419at5206"/>
<dbReference type="Proteomes" id="UP000010091">
    <property type="component" value="Chromosome 2"/>
</dbReference>
<dbReference type="GO" id="GO:0005886">
    <property type="term" value="C:plasma membrane"/>
    <property type="evidence" value="ECO:0000314"/>
    <property type="project" value="UniProtKB"/>
</dbReference>
<dbReference type="GO" id="GO:0005891">
    <property type="term" value="C:voltage-gated calcium channel complex"/>
    <property type="evidence" value="ECO:0000314"/>
    <property type="project" value="UniProtKB"/>
</dbReference>
<dbReference type="GO" id="GO:0005262">
    <property type="term" value="F:calcium channel activity"/>
    <property type="evidence" value="ECO:0007669"/>
    <property type="project" value="UniProtKB-KW"/>
</dbReference>
<dbReference type="GO" id="GO:0098703">
    <property type="term" value="P:calcium ion import across plasma membrane"/>
    <property type="evidence" value="ECO:0000314"/>
    <property type="project" value="UniProtKB"/>
</dbReference>
<dbReference type="InterPro" id="IPR024338">
    <property type="entry name" value="MID1/Yam8"/>
</dbReference>
<dbReference type="PANTHER" id="PTHR39142:SF1">
    <property type="entry name" value="AEL197CP"/>
    <property type="match status" value="1"/>
</dbReference>
<dbReference type="PANTHER" id="PTHR39142">
    <property type="entry name" value="MID1P"/>
    <property type="match status" value="1"/>
</dbReference>
<dbReference type="Pfam" id="PF12929">
    <property type="entry name" value="Mid1"/>
    <property type="match status" value="1"/>
</dbReference>
<name>MID1_CRYNH</name>
<organism evidence="10">
    <name type="scientific">Cryptococcus neoformans var. grubii serotype A (strain H99 / ATCC 208821 / CBS 10515 / FGSC 9487)</name>
    <name type="common">Filobasidiella neoformans var. grubii</name>
    <dbReference type="NCBI Taxonomy" id="235443"/>
    <lineage>
        <taxon>Eukaryota</taxon>
        <taxon>Fungi</taxon>
        <taxon>Dikarya</taxon>
        <taxon>Basidiomycota</taxon>
        <taxon>Agaricomycotina</taxon>
        <taxon>Tremellomycetes</taxon>
        <taxon>Tremellales</taxon>
        <taxon>Cryptococcaceae</taxon>
        <taxon>Cryptococcus</taxon>
        <taxon>Cryptococcus neoformans species complex</taxon>
    </lineage>
</organism>